<keyword id="KW-0007">Acetylation</keyword>
<keyword id="KW-1003">Cell membrane</keyword>
<keyword id="KW-0449">Lipoprotein</keyword>
<keyword id="KW-0472">Membrane</keyword>
<keyword id="KW-0488">Methylation</keyword>
<keyword id="KW-0636">Prenylation</keyword>
<keyword id="KW-1185">Reference proteome</keyword>
<keyword id="KW-0807">Transducer</keyword>
<comment type="function">
    <text evidence="3">Guanine nucleotide-binding proteins (G proteins) are involved as a modulator or transducer in various transmembrane signaling systems. The beta and gamma chains are required for the GTPase activity, for replacement of GDP by GTP, and for G protein-effector interaction. Plays a role in the regulation of adenylyl cyclase signaling in certain regions of the brain. Plays a role in the formation or stabilization of a G protein heterotrimer (G(olf) subunit alpha-beta-gamma-7) that is required for adenylyl cyclase activity in the striatum.</text>
</comment>
<comment type="subunit">
    <text>G proteins are composed of 3 units, alpha, beta and gamma.</text>
</comment>
<comment type="subcellular location">
    <subcellularLocation>
        <location evidence="4">Cell membrane</location>
        <topology evidence="4">Lipid-anchor</topology>
        <orientation evidence="4">Cytoplasmic side</orientation>
    </subcellularLocation>
</comment>
<comment type="tissue specificity">
    <text evidence="3">Brain. Found in the hippocampus, striatum, midbrain and cortex.</text>
</comment>
<comment type="disruption phenotype">
    <text evidence="3">Mice display increased startle response but normal prepulse inhibition of the startle response. No effect on survival to weaning, fertility and mortality.</text>
</comment>
<comment type="similarity">
    <text evidence="4">Belongs to the G protein gamma family.</text>
</comment>
<proteinExistence type="evidence at protein level"/>
<organism>
    <name type="scientific">Mus musculus</name>
    <name type="common">Mouse</name>
    <dbReference type="NCBI Taxonomy" id="10090"/>
    <lineage>
        <taxon>Eukaryota</taxon>
        <taxon>Metazoa</taxon>
        <taxon>Chordata</taxon>
        <taxon>Craniata</taxon>
        <taxon>Vertebrata</taxon>
        <taxon>Euteleostomi</taxon>
        <taxon>Mammalia</taxon>
        <taxon>Eutheria</taxon>
        <taxon>Euarchontoglires</taxon>
        <taxon>Glires</taxon>
        <taxon>Rodentia</taxon>
        <taxon>Myomorpha</taxon>
        <taxon>Muroidea</taxon>
        <taxon>Muridae</taxon>
        <taxon>Murinae</taxon>
        <taxon>Mus</taxon>
        <taxon>Mus</taxon>
    </lineage>
</organism>
<name>GBG7_MOUSE</name>
<dbReference type="EMBL" id="AY035844">
    <property type="protein sequence ID" value="AAK61365.1"/>
    <property type="molecule type" value="mRNA"/>
</dbReference>
<dbReference type="EMBL" id="BC034108">
    <property type="protein sequence ID" value="AAH34108.1"/>
    <property type="molecule type" value="mRNA"/>
</dbReference>
<dbReference type="EMBL" id="U38499">
    <property type="protein sequence ID" value="AAB01730.1"/>
    <property type="molecule type" value="mRNA"/>
</dbReference>
<dbReference type="CCDS" id="CCDS24039.1"/>
<dbReference type="RefSeq" id="NP_001033744.2">
    <property type="nucleotide sequence ID" value="NM_001038655.2"/>
</dbReference>
<dbReference type="RefSeq" id="NP_001393192.1">
    <property type="nucleotide sequence ID" value="NM_001406263.1"/>
</dbReference>
<dbReference type="RefSeq" id="NP_001393193.1">
    <property type="nucleotide sequence ID" value="NM_001406264.1"/>
</dbReference>
<dbReference type="RefSeq" id="NP_034449.3">
    <property type="nucleotide sequence ID" value="NM_010319.4"/>
</dbReference>
<dbReference type="SMR" id="Q61016"/>
<dbReference type="BioGRID" id="199992">
    <property type="interactions" value="4"/>
</dbReference>
<dbReference type="FunCoup" id="Q61016">
    <property type="interactions" value="1926"/>
</dbReference>
<dbReference type="IntAct" id="Q61016">
    <property type="interactions" value="1"/>
</dbReference>
<dbReference type="STRING" id="10090.ENSMUSP00000097061"/>
<dbReference type="iPTMnet" id="Q61016"/>
<dbReference type="PhosphoSitePlus" id="Q61016"/>
<dbReference type="PaxDb" id="10090-ENSMUSP00000097061"/>
<dbReference type="ProteomicsDB" id="266778"/>
<dbReference type="Pumba" id="Q61016"/>
<dbReference type="Antibodypedia" id="23032">
    <property type="antibodies" value="149 antibodies from 23 providers"/>
</dbReference>
<dbReference type="Ensembl" id="ENSMUST00000117805.8">
    <property type="protein sequence ID" value="ENSMUSP00000112409.2"/>
    <property type="gene ID" value="ENSMUSG00000048240.16"/>
</dbReference>
<dbReference type="Ensembl" id="ENSMUST00000118233.8">
    <property type="protein sequence ID" value="ENSMUSP00000114003.2"/>
    <property type="gene ID" value="ENSMUSG00000048240.16"/>
</dbReference>
<dbReference type="Ensembl" id="ENSMUST00000118465.8">
    <property type="protein sequence ID" value="ENSMUSP00000113798.2"/>
    <property type="gene ID" value="ENSMUSG00000048240.16"/>
</dbReference>
<dbReference type="GeneID" id="14708"/>
<dbReference type="KEGG" id="mmu:14708"/>
<dbReference type="AGR" id="MGI:95787"/>
<dbReference type="CTD" id="2788"/>
<dbReference type="MGI" id="MGI:95787">
    <property type="gene designation" value="Gng7"/>
</dbReference>
<dbReference type="VEuPathDB" id="HostDB:ENSMUSG00000048240"/>
<dbReference type="eggNOG" id="KOG4119">
    <property type="taxonomic scope" value="Eukaryota"/>
</dbReference>
<dbReference type="GeneTree" id="ENSGT01100000263497"/>
<dbReference type="HOGENOM" id="CLU_168377_3_1_1"/>
<dbReference type="InParanoid" id="Q61016"/>
<dbReference type="OMA" id="CLELMNY"/>
<dbReference type="PhylomeDB" id="Q61016"/>
<dbReference type="Reactome" id="R-MMU-1296041">
    <property type="pathway name" value="Activation of G protein gated Potassium channels"/>
</dbReference>
<dbReference type="Reactome" id="R-MMU-202040">
    <property type="pathway name" value="G-protein activation"/>
</dbReference>
<dbReference type="Reactome" id="R-MMU-381676">
    <property type="pathway name" value="Glucagon-like Peptide-1 (GLP1) regulates insulin secretion"/>
</dbReference>
<dbReference type="Reactome" id="R-MMU-392170">
    <property type="pathway name" value="ADP signalling through P2Y purinoceptor 12"/>
</dbReference>
<dbReference type="Reactome" id="R-MMU-392451">
    <property type="pathway name" value="G beta:gamma signalling through PI3Kgamma"/>
</dbReference>
<dbReference type="Reactome" id="R-MMU-392851">
    <property type="pathway name" value="Prostacyclin signalling through prostacyclin receptor"/>
</dbReference>
<dbReference type="Reactome" id="R-MMU-400042">
    <property type="pathway name" value="Adrenaline,noradrenaline inhibits insulin secretion"/>
</dbReference>
<dbReference type="Reactome" id="R-MMU-4086398">
    <property type="pathway name" value="Ca2+ pathway"/>
</dbReference>
<dbReference type="Reactome" id="R-MMU-416476">
    <property type="pathway name" value="G alpha (q) signalling events"/>
</dbReference>
<dbReference type="Reactome" id="R-MMU-416482">
    <property type="pathway name" value="G alpha (12/13) signalling events"/>
</dbReference>
<dbReference type="Reactome" id="R-MMU-418217">
    <property type="pathway name" value="G beta:gamma signalling through PLC beta"/>
</dbReference>
<dbReference type="Reactome" id="R-MMU-418555">
    <property type="pathway name" value="G alpha (s) signalling events"/>
</dbReference>
<dbReference type="Reactome" id="R-MMU-418592">
    <property type="pathway name" value="ADP signalling through P2Y purinoceptor 1"/>
</dbReference>
<dbReference type="Reactome" id="R-MMU-418594">
    <property type="pathway name" value="G alpha (i) signalling events"/>
</dbReference>
<dbReference type="Reactome" id="R-MMU-418597">
    <property type="pathway name" value="G alpha (z) signalling events"/>
</dbReference>
<dbReference type="Reactome" id="R-MMU-420092">
    <property type="pathway name" value="Glucagon-type ligand receptors"/>
</dbReference>
<dbReference type="Reactome" id="R-MMU-428930">
    <property type="pathway name" value="Thromboxane signalling through TP receptor"/>
</dbReference>
<dbReference type="Reactome" id="R-MMU-432040">
    <property type="pathway name" value="Vasopressin regulates renal water homeostasis via Aquaporins"/>
</dbReference>
<dbReference type="Reactome" id="R-MMU-456926">
    <property type="pathway name" value="Thrombin signalling through proteinase activated receptors (PARs)"/>
</dbReference>
<dbReference type="Reactome" id="R-MMU-500657">
    <property type="pathway name" value="Presynaptic function of Kainate receptors"/>
</dbReference>
<dbReference type="Reactome" id="R-MMU-6814122">
    <property type="pathway name" value="Cooperation of PDCL (PhLP1) and TRiC/CCT in G-protein beta folding"/>
</dbReference>
<dbReference type="Reactome" id="R-MMU-8964315">
    <property type="pathway name" value="G beta:gamma signalling through BTK"/>
</dbReference>
<dbReference type="Reactome" id="R-MMU-8964616">
    <property type="pathway name" value="G beta:gamma signalling through CDC42"/>
</dbReference>
<dbReference type="Reactome" id="R-MMU-9009391">
    <property type="pathway name" value="Extra-nuclear estrogen signaling"/>
</dbReference>
<dbReference type="Reactome" id="R-MMU-9634597">
    <property type="pathway name" value="GPER1 signaling"/>
</dbReference>
<dbReference type="Reactome" id="R-MMU-9856530">
    <property type="pathway name" value="High laminar flow shear stress activates signaling by PIEZO1 and PECAM1:CDH5:KDR in endothelial cells"/>
</dbReference>
<dbReference type="Reactome" id="R-MMU-997272">
    <property type="pathway name" value="Inhibition of voltage gated Ca2+ channels via Gbeta/gamma subunits"/>
</dbReference>
<dbReference type="CD-CODE" id="CE726F99">
    <property type="entry name" value="Postsynaptic density"/>
</dbReference>
<dbReference type="ChiTaRS" id="Gng7">
    <property type="organism name" value="mouse"/>
</dbReference>
<dbReference type="PRO" id="PR:Q61016"/>
<dbReference type="Proteomes" id="UP000000589">
    <property type="component" value="Chromosome 10"/>
</dbReference>
<dbReference type="RNAct" id="Q61016">
    <property type="molecule type" value="protein"/>
</dbReference>
<dbReference type="Bgee" id="ENSMUSG00000048240">
    <property type="expression patterns" value="Expressed in caudate-putamen and 153 other cell types or tissues"/>
</dbReference>
<dbReference type="ExpressionAtlas" id="Q61016">
    <property type="expression patterns" value="baseline and differential"/>
</dbReference>
<dbReference type="GO" id="GO:0005834">
    <property type="term" value="C:heterotrimeric G-protein complex"/>
    <property type="evidence" value="ECO:0007669"/>
    <property type="project" value="InterPro"/>
</dbReference>
<dbReference type="GO" id="GO:0045202">
    <property type="term" value="C:synapse"/>
    <property type="evidence" value="ECO:0000314"/>
    <property type="project" value="SynGO"/>
</dbReference>
<dbReference type="GO" id="GO:0031681">
    <property type="term" value="F:G-protein beta-subunit binding"/>
    <property type="evidence" value="ECO:0007669"/>
    <property type="project" value="InterPro"/>
</dbReference>
<dbReference type="GO" id="GO:0001662">
    <property type="term" value="P:behavioral fear response"/>
    <property type="evidence" value="ECO:0000315"/>
    <property type="project" value="MGI"/>
</dbReference>
<dbReference type="GO" id="GO:0007186">
    <property type="term" value="P:G protein-coupled receptor signaling pathway"/>
    <property type="evidence" value="ECO:0007669"/>
    <property type="project" value="InterPro"/>
</dbReference>
<dbReference type="GO" id="GO:0007626">
    <property type="term" value="P:locomotory behavior"/>
    <property type="evidence" value="ECO:0000315"/>
    <property type="project" value="MGI"/>
</dbReference>
<dbReference type="GO" id="GO:0007168">
    <property type="term" value="P:receptor guanylyl cyclase signaling pathway"/>
    <property type="evidence" value="ECO:0000315"/>
    <property type="project" value="MGI"/>
</dbReference>
<dbReference type="GO" id="GO:0045761">
    <property type="term" value="P:regulation of adenylate cyclase activity"/>
    <property type="evidence" value="ECO:0000315"/>
    <property type="project" value="UniProtKB"/>
</dbReference>
<dbReference type="CDD" id="cd00068">
    <property type="entry name" value="GGL"/>
    <property type="match status" value="1"/>
</dbReference>
<dbReference type="FunFam" id="4.10.260.10:FF:000001">
    <property type="entry name" value="Guanine nucleotide-binding protein subunit gamma"/>
    <property type="match status" value="1"/>
</dbReference>
<dbReference type="Gene3D" id="4.10.260.10">
    <property type="entry name" value="Transducin (heterotrimeric G protein), gamma chain"/>
    <property type="match status" value="1"/>
</dbReference>
<dbReference type="InterPro" id="IPR015898">
    <property type="entry name" value="G-protein_gamma-like_dom"/>
</dbReference>
<dbReference type="InterPro" id="IPR036284">
    <property type="entry name" value="GGL_sf"/>
</dbReference>
<dbReference type="InterPro" id="IPR001770">
    <property type="entry name" value="Gprotein-gamma"/>
</dbReference>
<dbReference type="PANTHER" id="PTHR13809">
    <property type="entry name" value="GUANINE NUCLEOTIDE-BINDING PROTEIN GAMMA SUBUNIT"/>
    <property type="match status" value="1"/>
</dbReference>
<dbReference type="Pfam" id="PF00631">
    <property type="entry name" value="G-gamma"/>
    <property type="match status" value="1"/>
</dbReference>
<dbReference type="PRINTS" id="PR00321">
    <property type="entry name" value="GPROTEING"/>
</dbReference>
<dbReference type="SMART" id="SM01224">
    <property type="entry name" value="G_gamma"/>
    <property type="match status" value="1"/>
</dbReference>
<dbReference type="SMART" id="SM00224">
    <property type="entry name" value="GGL"/>
    <property type="match status" value="1"/>
</dbReference>
<dbReference type="SUPFAM" id="SSF48670">
    <property type="entry name" value="Transducin (heterotrimeric G protein), gamma chain"/>
    <property type="match status" value="1"/>
</dbReference>
<dbReference type="PROSITE" id="PS50058">
    <property type="entry name" value="G_PROTEIN_GAMMA"/>
    <property type="match status" value="1"/>
</dbReference>
<evidence type="ECO:0000250" key="1"/>
<evidence type="ECO:0000250" key="2">
    <source>
        <dbReference type="UniProtKB" id="O60262"/>
    </source>
</evidence>
<evidence type="ECO:0000269" key="3">
    <source>
    </source>
</evidence>
<evidence type="ECO:0000305" key="4"/>
<sequence>MSGTNNVAQARKLVEQLRIEAGIERIKVSKASSDLMGYCEQHARNDPLLVGVPASENPFKDKKPCIIL</sequence>
<gene>
    <name type="primary">Gng7</name>
    <name type="synonym">Gngt7</name>
</gene>
<reference key="1">
    <citation type="submission" date="2001-05" db="EMBL/GenBank/DDBJ databases">
        <title>Mouse G-protein gamma 7 cDNA.</title>
        <authorList>
            <person name="Xiong X."/>
            <person name="Han J."/>
        </authorList>
    </citation>
    <scope>NUCLEOTIDE SEQUENCE [MRNA]</scope>
    <source>
        <strain>BALB/cJ</strain>
    </source>
</reference>
<reference key="2">
    <citation type="journal article" date="2004" name="Genome Res.">
        <title>The status, quality, and expansion of the NIH full-length cDNA project: the Mammalian Gene Collection (MGC).</title>
        <authorList>
            <consortium name="The MGC Project Team"/>
        </authorList>
    </citation>
    <scope>NUCLEOTIDE SEQUENCE [LARGE SCALE MRNA]</scope>
    <source>
        <tissue>Eye</tissue>
    </source>
</reference>
<reference key="3">
    <citation type="journal article" date="1996" name="Mol. Reprod. Dev.">
        <title>G protein gene expression during mouse oocyte growth and maturation, and preimplantation embryo development.</title>
        <authorList>
            <person name="Williams C.J."/>
            <person name="Schultz R.M."/>
            <person name="Kopf G.S."/>
        </authorList>
    </citation>
    <scope>NUCLEOTIDE SEQUENCE [MRNA] OF 10-51</scope>
    <source>
        <strain>CF-1 / Harlan</strain>
    </source>
</reference>
<reference key="4">
    <citation type="journal article" date="2003" name="J. Biol. Chem.">
        <title>Loss of G protein gamma 7 alters behavior and reduces striatal alpha(olf) level and cAMP production.</title>
        <authorList>
            <person name="Schwindinger W.F."/>
            <person name="Betz K.S."/>
            <person name="Giger K.E."/>
            <person name="Sabol A."/>
            <person name="Bronson S.K."/>
            <person name="Robishaw J.D."/>
        </authorList>
    </citation>
    <scope>FUNCTION</scope>
    <scope>DISRUPTION PHENOTYPE</scope>
    <scope>TISSUE SPECIFICITY</scope>
</reference>
<reference key="5">
    <citation type="journal article" date="2010" name="Cell">
        <title>A tissue-specific atlas of mouse protein phosphorylation and expression.</title>
        <authorList>
            <person name="Huttlin E.L."/>
            <person name="Jedrychowski M.P."/>
            <person name="Elias J.E."/>
            <person name="Goswami T."/>
            <person name="Rad R."/>
            <person name="Beausoleil S.A."/>
            <person name="Villen J."/>
            <person name="Haas W."/>
            <person name="Sowa M.E."/>
            <person name="Gygi S.P."/>
        </authorList>
    </citation>
    <scope>IDENTIFICATION BY MASS SPECTROMETRY [LARGE SCALE ANALYSIS]</scope>
    <source>
        <tissue>Brain</tissue>
    </source>
</reference>
<accession>Q61016</accession>
<accession>Q8JZP6</accession>
<protein>
    <recommendedName>
        <fullName>Guanine nucleotide-binding protein G(I)/G(S)/G(O) subunit gamma-7</fullName>
    </recommendedName>
</protein>
<feature type="initiator methionine" description="Removed" evidence="2">
    <location>
        <position position="1"/>
    </location>
</feature>
<feature type="chain" id="PRO_0000012637" description="Guanine nucleotide-binding protein G(I)/G(S)/G(O) subunit gamma-7">
    <location>
        <begin position="2"/>
        <end position="65"/>
    </location>
</feature>
<feature type="propeptide" id="PRO_0000012638" description="Removed in mature form" evidence="1">
    <location>
        <begin position="66"/>
        <end position="68"/>
    </location>
</feature>
<feature type="modified residue" description="N-acetylserine" evidence="2">
    <location>
        <position position="2"/>
    </location>
</feature>
<feature type="modified residue" description="Cysteine methyl ester" evidence="1">
    <location>
        <position position="65"/>
    </location>
</feature>
<feature type="lipid moiety-binding region" description="S-geranylgeranyl cysteine" evidence="1">
    <location>
        <position position="65"/>
    </location>
</feature>